<proteinExistence type="inferred from homology"/>
<sequence length="213" mass="23967">MNDTSDIKHTSQLTSGDFTEASEPFALFAAWFAEAVASEPNDPDAMALATADADGLPDVRMVLMKGYDTQGFVFYSHIASAKGRELAANPKAALLFHWKSLRRQVRLRGPVTPVTDAEADAYFATRPKQAQIGAWASKQSQPLESRFAFEQAIAKQAAKYIIGSVPRPPGWRGWRITPAQFEFWHDRPFRLHDRIEFRRTAPDAPWTKTRLYP</sequence>
<reference key="1">
    <citation type="submission" date="2006-03" db="EMBL/GenBank/DDBJ databases">
        <title>Complete sequence of chromosome of Nitrobacter hamburgensis X14.</title>
        <authorList>
            <consortium name="US DOE Joint Genome Institute"/>
            <person name="Copeland A."/>
            <person name="Lucas S."/>
            <person name="Lapidus A."/>
            <person name="Barry K."/>
            <person name="Detter J.C."/>
            <person name="Glavina del Rio T."/>
            <person name="Hammon N."/>
            <person name="Israni S."/>
            <person name="Dalin E."/>
            <person name="Tice H."/>
            <person name="Pitluck S."/>
            <person name="Chain P."/>
            <person name="Malfatti S."/>
            <person name="Shin M."/>
            <person name="Vergez L."/>
            <person name="Schmutz J."/>
            <person name="Larimer F."/>
            <person name="Land M."/>
            <person name="Hauser L."/>
            <person name="Kyrpides N."/>
            <person name="Ivanova N."/>
            <person name="Ward B."/>
            <person name="Arp D."/>
            <person name="Klotz M."/>
            <person name="Stein L."/>
            <person name="O'Mullan G."/>
            <person name="Starkenburg S."/>
            <person name="Sayavedra L."/>
            <person name="Poret-Peterson A.T."/>
            <person name="Gentry M.E."/>
            <person name="Bruce D."/>
            <person name="Richardson P."/>
        </authorList>
    </citation>
    <scope>NUCLEOTIDE SEQUENCE [LARGE SCALE GENOMIC DNA]</scope>
    <source>
        <strain>DSM 10229 / NCIMB 13809 / X14</strain>
    </source>
</reference>
<protein>
    <recommendedName>
        <fullName evidence="1">Pyridoxine/pyridoxamine 5'-phosphate oxidase</fullName>
        <ecNumber evidence="1">1.4.3.5</ecNumber>
    </recommendedName>
    <alternativeName>
        <fullName evidence="1">PNP/PMP oxidase</fullName>
        <shortName evidence="1">PNPOx</shortName>
    </alternativeName>
    <alternativeName>
        <fullName evidence="1">Pyridoxal 5'-phosphate synthase</fullName>
    </alternativeName>
</protein>
<dbReference type="EC" id="1.4.3.5" evidence="1"/>
<dbReference type="EMBL" id="CP000319">
    <property type="protein sequence ID" value="ABE61646.1"/>
    <property type="molecule type" value="Genomic_DNA"/>
</dbReference>
<dbReference type="RefSeq" id="WP_011509348.1">
    <property type="nucleotide sequence ID" value="NC_007964.1"/>
</dbReference>
<dbReference type="SMR" id="Q1QQ51"/>
<dbReference type="STRING" id="323097.Nham_0765"/>
<dbReference type="KEGG" id="nha:Nham_0765"/>
<dbReference type="eggNOG" id="COG0259">
    <property type="taxonomic scope" value="Bacteria"/>
</dbReference>
<dbReference type="HOGENOM" id="CLU_032263_2_2_5"/>
<dbReference type="OrthoDB" id="9780392at2"/>
<dbReference type="UniPathway" id="UPA01068">
    <property type="reaction ID" value="UER00304"/>
</dbReference>
<dbReference type="UniPathway" id="UPA01068">
    <property type="reaction ID" value="UER00305"/>
</dbReference>
<dbReference type="Proteomes" id="UP000001953">
    <property type="component" value="Chromosome"/>
</dbReference>
<dbReference type="GO" id="GO:0010181">
    <property type="term" value="F:FMN binding"/>
    <property type="evidence" value="ECO:0007669"/>
    <property type="project" value="UniProtKB-UniRule"/>
</dbReference>
<dbReference type="GO" id="GO:0004733">
    <property type="term" value="F:pyridoxamine phosphate oxidase activity"/>
    <property type="evidence" value="ECO:0007669"/>
    <property type="project" value="UniProtKB-UniRule"/>
</dbReference>
<dbReference type="GO" id="GO:0008615">
    <property type="term" value="P:pyridoxine biosynthetic process"/>
    <property type="evidence" value="ECO:0007669"/>
    <property type="project" value="UniProtKB-KW"/>
</dbReference>
<dbReference type="Gene3D" id="2.30.110.10">
    <property type="entry name" value="Electron Transport, Fmn-binding Protein, Chain A"/>
    <property type="match status" value="1"/>
</dbReference>
<dbReference type="HAMAP" id="MF_01629">
    <property type="entry name" value="PdxH"/>
    <property type="match status" value="1"/>
</dbReference>
<dbReference type="InterPro" id="IPR000659">
    <property type="entry name" value="Pyridox_Oxase"/>
</dbReference>
<dbReference type="InterPro" id="IPR019740">
    <property type="entry name" value="Pyridox_Oxase_CS"/>
</dbReference>
<dbReference type="InterPro" id="IPR011576">
    <property type="entry name" value="Pyridox_Oxase_N"/>
</dbReference>
<dbReference type="InterPro" id="IPR019576">
    <property type="entry name" value="Pyridoxamine_oxidase_dimer_C"/>
</dbReference>
<dbReference type="InterPro" id="IPR012349">
    <property type="entry name" value="Split_barrel_FMN-bd"/>
</dbReference>
<dbReference type="NCBIfam" id="TIGR00558">
    <property type="entry name" value="pdxH"/>
    <property type="match status" value="1"/>
</dbReference>
<dbReference type="NCBIfam" id="NF004231">
    <property type="entry name" value="PRK05679.1"/>
    <property type="match status" value="1"/>
</dbReference>
<dbReference type="PANTHER" id="PTHR10851:SF0">
    <property type="entry name" value="PYRIDOXINE-5'-PHOSPHATE OXIDASE"/>
    <property type="match status" value="1"/>
</dbReference>
<dbReference type="PANTHER" id="PTHR10851">
    <property type="entry name" value="PYRIDOXINE-5-PHOSPHATE OXIDASE"/>
    <property type="match status" value="1"/>
</dbReference>
<dbReference type="Pfam" id="PF10590">
    <property type="entry name" value="PNP_phzG_C"/>
    <property type="match status" value="1"/>
</dbReference>
<dbReference type="Pfam" id="PF01243">
    <property type="entry name" value="PNPOx_N"/>
    <property type="match status" value="1"/>
</dbReference>
<dbReference type="PIRSF" id="PIRSF000190">
    <property type="entry name" value="Pyd_amn-ph_oxd"/>
    <property type="match status" value="1"/>
</dbReference>
<dbReference type="SUPFAM" id="SSF50475">
    <property type="entry name" value="FMN-binding split barrel"/>
    <property type="match status" value="1"/>
</dbReference>
<dbReference type="PROSITE" id="PS01064">
    <property type="entry name" value="PYRIDOX_OXIDASE"/>
    <property type="match status" value="1"/>
</dbReference>
<name>PDXH_NITHX</name>
<gene>
    <name evidence="1" type="primary">pdxH</name>
    <name type="ordered locus">Nham_0765</name>
</gene>
<accession>Q1QQ51</accession>
<evidence type="ECO:0000255" key="1">
    <source>
        <dbReference type="HAMAP-Rule" id="MF_01629"/>
    </source>
</evidence>
<keyword id="KW-0285">Flavoprotein</keyword>
<keyword id="KW-0288">FMN</keyword>
<keyword id="KW-0560">Oxidoreductase</keyword>
<keyword id="KW-0664">Pyridoxine biosynthesis</keyword>
<keyword id="KW-1185">Reference proteome</keyword>
<comment type="function">
    <text evidence="1">Catalyzes the oxidation of either pyridoxine 5'-phosphate (PNP) or pyridoxamine 5'-phosphate (PMP) into pyridoxal 5'-phosphate (PLP).</text>
</comment>
<comment type="catalytic activity">
    <reaction evidence="1">
        <text>pyridoxamine 5'-phosphate + O2 + H2O = pyridoxal 5'-phosphate + H2O2 + NH4(+)</text>
        <dbReference type="Rhea" id="RHEA:15817"/>
        <dbReference type="ChEBI" id="CHEBI:15377"/>
        <dbReference type="ChEBI" id="CHEBI:15379"/>
        <dbReference type="ChEBI" id="CHEBI:16240"/>
        <dbReference type="ChEBI" id="CHEBI:28938"/>
        <dbReference type="ChEBI" id="CHEBI:58451"/>
        <dbReference type="ChEBI" id="CHEBI:597326"/>
        <dbReference type="EC" id="1.4.3.5"/>
    </reaction>
</comment>
<comment type="catalytic activity">
    <reaction evidence="1">
        <text>pyridoxine 5'-phosphate + O2 = pyridoxal 5'-phosphate + H2O2</text>
        <dbReference type="Rhea" id="RHEA:15149"/>
        <dbReference type="ChEBI" id="CHEBI:15379"/>
        <dbReference type="ChEBI" id="CHEBI:16240"/>
        <dbReference type="ChEBI" id="CHEBI:58589"/>
        <dbReference type="ChEBI" id="CHEBI:597326"/>
        <dbReference type="EC" id="1.4.3.5"/>
    </reaction>
</comment>
<comment type="cofactor">
    <cofactor evidence="1">
        <name>FMN</name>
        <dbReference type="ChEBI" id="CHEBI:58210"/>
    </cofactor>
    <text evidence="1">Binds 1 FMN per subunit.</text>
</comment>
<comment type="pathway">
    <text evidence="1">Cofactor metabolism; pyridoxal 5'-phosphate salvage; pyridoxal 5'-phosphate from pyridoxamine 5'-phosphate: step 1/1.</text>
</comment>
<comment type="pathway">
    <text evidence="1">Cofactor metabolism; pyridoxal 5'-phosphate salvage; pyridoxal 5'-phosphate from pyridoxine 5'-phosphate: step 1/1.</text>
</comment>
<comment type="subunit">
    <text evidence="1">Homodimer.</text>
</comment>
<comment type="similarity">
    <text evidence="1">Belongs to the pyridoxamine 5'-phosphate oxidase family.</text>
</comment>
<feature type="chain" id="PRO_0000255873" description="Pyridoxine/pyridoxamine 5'-phosphate oxidase">
    <location>
        <begin position="1"/>
        <end position="213"/>
    </location>
</feature>
<feature type="binding site" evidence="1">
    <location>
        <begin position="60"/>
        <end position="65"/>
    </location>
    <ligand>
        <name>FMN</name>
        <dbReference type="ChEBI" id="CHEBI:58210"/>
    </ligand>
</feature>
<feature type="binding site" evidence="1">
    <location>
        <position position="65"/>
    </location>
    <ligand>
        <name>substrate</name>
    </ligand>
</feature>
<feature type="binding site" evidence="1">
    <location>
        <begin position="75"/>
        <end position="76"/>
    </location>
    <ligand>
        <name>FMN</name>
        <dbReference type="ChEBI" id="CHEBI:58210"/>
    </ligand>
</feature>
<feature type="binding site" evidence="1">
    <location>
        <position position="82"/>
    </location>
    <ligand>
        <name>FMN</name>
        <dbReference type="ChEBI" id="CHEBI:58210"/>
    </ligand>
</feature>
<feature type="binding site" evidence="1">
    <location>
        <position position="104"/>
    </location>
    <ligand>
        <name>FMN</name>
        <dbReference type="ChEBI" id="CHEBI:58210"/>
    </ligand>
</feature>
<feature type="binding site" evidence="1">
    <location>
        <position position="122"/>
    </location>
    <ligand>
        <name>substrate</name>
    </ligand>
</feature>
<feature type="binding site" evidence="1">
    <location>
        <position position="126"/>
    </location>
    <ligand>
        <name>substrate</name>
    </ligand>
</feature>
<feature type="binding site" evidence="1">
    <location>
        <begin position="139"/>
        <end position="140"/>
    </location>
    <ligand>
        <name>FMN</name>
        <dbReference type="ChEBI" id="CHEBI:58210"/>
    </ligand>
</feature>
<feature type="binding site" evidence="1">
    <location>
        <position position="184"/>
    </location>
    <ligand>
        <name>FMN</name>
        <dbReference type="ChEBI" id="CHEBI:58210"/>
    </ligand>
</feature>
<feature type="binding site" evidence="1">
    <location>
        <begin position="190"/>
        <end position="192"/>
    </location>
    <ligand>
        <name>substrate</name>
    </ligand>
</feature>
<feature type="binding site" evidence="1">
    <location>
        <position position="194"/>
    </location>
    <ligand>
        <name>FMN</name>
        <dbReference type="ChEBI" id="CHEBI:58210"/>
    </ligand>
</feature>
<organism>
    <name type="scientific">Nitrobacter hamburgensis (strain DSM 10229 / NCIMB 13809 / X14)</name>
    <dbReference type="NCBI Taxonomy" id="323097"/>
    <lineage>
        <taxon>Bacteria</taxon>
        <taxon>Pseudomonadati</taxon>
        <taxon>Pseudomonadota</taxon>
        <taxon>Alphaproteobacteria</taxon>
        <taxon>Hyphomicrobiales</taxon>
        <taxon>Nitrobacteraceae</taxon>
        <taxon>Nitrobacter</taxon>
    </lineage>
</organism>